<gene>
    <name evidence="1" type="primary">WDR91</name>
</gene>
<name>WDR91_BOVIN</name>
<comment type="function">
    <text evidence="1 2">Functions as a negative regulator of the PI3 kinase/PI3K activity associated with endosomal membranes via BECN1, a core subunit of the PI3K complex. By modifying the phosphatidylinositol 3-phosphate/PtdInsP3 content of endosomal membranes may regulate endosome fusion, recycling, sorting and early to late endosome transport. It is for instance, required for the delivery of cargos like BST2/tetherin from early to late endosome and thereby participates indirectly to their degradation by the lysosome. May play a role in meiosis.</text>
</comment>
<comment type="subunit">
    <text evidence="1">Interacts with WDR81; involved in early to late endosome cargo transport. Interacts with BECN1; negatively regulates the PI3 kinase/PI3K activity associated with endosomal membranes.</text>
</comment>
<comment type="subcellular location">
    <subcellularLocation>
        <location evidence="1">Early endosome membrane</location>
        <topology evidence="1">Peripheral membrane protein</topology>
    </subcellularLocation>
    <subcellularLocation>
        <location evidence="1">Late endosome membrane</location>
    </subcellularLocation>
</comment>
<comment type="similarity">
    <text evidence="5">Belongs to the WD repeat WDR91 family.</text>
</comment>
<dbReference type="EMBL" id="BC105528">
    <property type="protein sequence ID" value="AAI05529.1"/>
    <property type="molecule type" value="mRNA"/>
</dbReference>
<dbReference type="EMBL" id="DV825576">
    <property type="status" value="NOT_ANNOTATED_CDS"/>
    <property type="molecule type" value="mRNA"/>
</dbReference>
<dbReference type="RefSeq" id="NP_001039948.1">
    <property type="nucleotide sequence ID" value="NM_001046483.1"/>
</dbReference>
<dbReference type="SMR" id="Q2HJE1"/>
<dbReference type="FunCoup" id="Q2HJE1">
    <property type="interactions" value="952"/>
</dbReference>
<dbReference type="STRING" id="9913.ENSBTAP00000023798"/>
<dbReference type="iPTMnet" id="Q2HJE1"/>
<dbReference type="PaxDb" id="9913-ENSBTAP00000023798"/>
<dbReference type="Ensembl" id="ENSBTAT00000023798.6">
    <property type="protein sequence ID" value="ENSBTAP00000023798.6"/>
    <property type="gene ID" value="ENSBTAG00000017905.6"/>
</dbReference>
<dbReference type="GeneID" id="540606"/>
<dbReference type="KEGG" id="bta:540606"/>
<dbReference type="CTD" id="29062"/>
<dbReference type="VGNC" id="VGNC:36927">
    <property type="gene designation" value="WDR91"/>
</dbReference>
<dbReference type="eggNOG" id="KOG1333">
    <property type="taxonomic scope" value="Eukaryota"/>
</dbReference>
<dbReference type="GeneTree" id="ENSGT00390000001566"/>
<dbReference type="HOGENOM" id="CLU_022078_0_0_1"/>
<dbReference type="InParanoid" id="Q2HJE1"/>
<dbReference type="OrthoDB" id="193023at2759"/>
<dbReference type="TreeFam" id="TF317339"/>
<dbReference type="Proteomes" id="UP000009136">
    <property type="component" value="Chromosome 4"/>
</dbReference>
<dbReference type="GO" id="GO:0005829">
    <property type="term" value="C:cytosol"/>
    <property type="evidence" value="ECO:0000250"/>
    <property type="project" value="UniProtKB"/>
</dbReference>
<dbReference type="GO" id="GO:0031901">
    <property type="term" value="C:early endosome membrane"/>
    <property type="evidence" value="ECO:0000250"/>
    <property type="project" value="UniProtKB"/>
</dbReference>
<dbReference type="GO" id="GO:0010008">
    <property type="term" value="C:endosome membrane"/>
    <property type="evidence" value="ECO:0000250"/>
    <property type="project" value="UniProtKB"/>
</dbReference>
<dbReference type="GO" id="GO:0031902">
    <property type="term" value="C:late endosome membrane"/>
    <property type="evidence" value="ECO:0000250"/>
    <property type="project" value="UniProtKB"/>
</dbReference>
<dbReference type="GO" id="GO:0141039">
    <property type="term" value="F:phosphatidylinositol 3-kinase inhibitor activity"/>
    <property type="evidence" value="ECO:0000250"/>
    <property type="project" value="UniProtKB"/>
</dbReference>
<dbReference type="GO" id="GO:0035014">
    <property type="term" value="F:phosphatidylinositol 3-kinase regulator activity"/>
    <property type="evidence" value="ECO:0000318"/>
    <property type="project" value="GO_Central"/>
</dbReference>
<dbReference type="GO" id="GO:0045022">
    <property type="term" value="P:early endosome to late endosome transport"/>
    <property type="evidence" value="ECO:0000250"/>
    <property type="project" value="UniProtKB"/>
</dbReference>
<dbReference type="GO" id="GO:0051898">
    <property type="term" value="P:negative regulation of phosphatidylinositol 3-kinase/protein kinase B signal transduction"/>
    <property type="evidence" value="ECO:0007669"/>
    <property type="project" value="InterPro"/>
</dbReference>
<dbReference type="GO" id="GO:0042176">
    <property type="term" value="P:regulation of protein catabolic process"/>
    <property type="evidence" value="ECO:0007669"/>
    <property type="project" value="Ensembl"/>
</dbReference>
<dbReference type="FunFam" id="2.130.10.10:FF:000312">
    <property type="entry name" value="WD repeat domain 91"/>
    <property type="match status" value="1"/>
</dbReference>
<dbReference type="FunFam" id="2.130.10.10:FF:000276">
    <property type="entry name" value="WD repeat-containing protein 91"/>
    <property type="match status" value="1"/>
</dbReference>
<dbReference type="Gene3D" id="2.130.10.10">
    <property type="entry name" value="YVTN repeat-like/Quinoprotein amine dehydrogenase"/>
    <property type="match status" value="2"/>
</dbReference>
<dbReference type="InterPro" id="IPR056327">
    <property type="entry name" value="ARMC9_CTLH-like_dom"/>
</dbReference>
<dbReference type="InterPro" id="IPR015943">
    <property type="entry name" value="WD40/YVTN_repeat-like_dom_sf"/>
</dbReference>
<dbReference type="InterPro" id="IPR036322">
    <property type="entry name" value="WD40_repeat_dom_sf"/>
</dbReference>
<dbReference type="InterPro" id="IPR001680">
    <property type="entry name" value="WD40_rpt"/>
</dbReference>
<dbReference type="InterPro" id="IPR039724">
    <property type="entry name" value="WDR91"/>
</dbReference>
<dbReference type="PANTHER" id="PTHR13083">
    <property type="entry name" value="WD REPEAT-CONTAINING PROTEIN 91"/>
    <property type="match status" value="1"/>
</dbReference>
<dbReference type="PANTHER" id="PTHR13083:SF3">
    <property type="entry name" value="WD REPEAT-CONTAINING PROTEIN 91"/>
    <property type="match status" value="1"/>
</dbReference>
<dbReference type="Pfam" id="PF23138">
    <property type="entry name" value="CTLH_Armc9"/>
    <property type="match status" value="1"/>
</dbReference>
<dbReference type="Pfam" id="PF00400">
    <property type="entry name" value="WD40"/>
    <property type="match status" value="3"/>
</dbReference>
<dbReference type="SMART" id="SM00320">
    <property type="entry name" value="WD40"/>
    <property type="match status" value="6"/>
</dbReference>
<dbReference type="SUPFAM" id="SSF50978">
    <property type="entry name" value="WD40 repeat-like"/>
    <property type="match status" value="1"/>
</dbReference>
<dbReference type="PROSITE" id="PS50082">
    <property type="entry name" value="WD_REPEATS_2"/>
    <property type="match status" value="1"/>
</dbReference>
<dbReference type="PROSITE" id="PS50294">
    <property type="entry name" value="WD_REPEATS_REGION"/>
    <property type="match status" value="2"/>
</dbReference>
<reference key="1">
    <citation type="submission" date="2005-09" db="EMBL/GenBank/DDBJ databases">
        <authorList>
            <consortium name="NIH - Mammalian Gene Collection (MGC) project"/>
        </authorList>
    </citation>
    <scope>NUCLEOTIDE SEQUENCE [LARGE SCALE MRNA]</scope>
    <source>
        <strain>Hereford</strain>
        <tissue>Uterus</tissue>
    </source>
</reference>
<sequence>MAEAVERTDEMVREYLLFRGFTHTLRQLDAEIKADKEKGFRVDKIVDQLQQLMQVYDLAALRDYWNYLERRLFSRLEDVYRPTINKLKTSLFRFYLVYTIQTNRSDKAQEFFAKQASELQNQAEWKDWFVLPFLPSPDTNPTFATYFSRQWADTFIVSLHNFLSVLFQCMPVPVILNFDAECQRTNQVQEENEVLRQKLFALQAEIHRLKKEEQQPEEEEALVQHKLPPYVSNMDRLGDSELAMVCSQRNASLSQSPRVGFLSSLLPQSKKSPSRLSPAQGPPQTQSSAKKESFGSQTTKGREPAGAPKDGKSLFGGLAPGESSWSQHRQRRLQDHGKERKELLSMTLQCAEKKPEAGGPEAEPCPEPHVEALETLTRVPTAGPEGGGVRPEQPFIVLGQEEYGEHHSSIMHCRVDCSGRRVASLDVDGVIKVWSFNPIMQTKASSISKSPLLSLEWATKRDRLLLLGSGVGTVRLYDTEAKKNLCEININDDMPRILSLACSPSGASFVCSAAASSLTAHVDVLAPDIGSRGTNQVPGRLLLWDTKTMKQQLQFSLDPEPIAINCTAFNHNGNLLVTGAADGVIRLFDMQQHECAMSWKAHCGEVYSVEFSYDENTVYSIGEDGKFIQWNIHKSGLKVSEYGLPADATGPFVLSGYSGYKQVQVPRGRLFAFDSEGNYMLTCSATGGVIYKLGGDDKVLESCVSLGGHRAPVVTVDWSTAMDCGTCLTASMDGKIKLTTLLAHKV</sequence>
<protein>
    <recommendedName>
        <fullName evidence="1">WD repeat-containing protein 91</fullName>
    </recommendedName>
</protein>
<feature type="chain" id="PRO_0000295745" description="WD repeat-containing protein 91">
    <location>
        <begin position="1"/>
        <end position="746"/>
    </location>
</feature>
<feature type="repeat" description="WD 1">
    <location>
        <begin position="405"/>
        <end position="444"/>
    </location>
</feature>
<feature type="repeat" description="WD 2">
    <location>
        <begin position="447"/>
        <end position="487"/>
    </location>
</feature>
<feature type="repeat" description="WD 3">
    <location>
        <begin position="514"/>
        <end position="554"/>
    </location>
</feature>
<feature type="repeat" description="WD 4">
    <location>
        <begin position="559"/>
        <end position="598"/>
    </location>
</feature>
<feature type="repeat" description="WD 5">
    <location>
        <begin position="601"/>
        <end position="640"/>
    </location>
</feature>
<feature type="repeat" description="WD 6">
    <location>
        <begin position="663"/>
        <end position="701"/>
    </location>
</feature>
<feature type="repeat" description="WD 7">
    <location>
        <begin position="708"/>
        <end position="746"/>
    </location>
</feature>
<feature type="region of interest" description="Disordered" evidence="4">
    <location>
        <begin position="265"/>
        <end position="336"/>
    </location>
</feature>
<feature type="coiled-coil region" evidence="3">
    <location>
        <begin position="183"/>
        <end position="215"/>
    </location>
</feature>
<feature type="compositionally biased region" description="Low complexity" evidence="4">
    <location>
        <begin position="265"/>
        <end position="278"/>
    </location>
</feature>
<feature type="compositionally biased region" description="Polar residues" evidence="4">
    <location>
        <begin position="282"/>
        <end position="299"/>
    </location>
</feature>
<feature type="modified residue" description="Phosphoserine" evidence="1">
    <location>
        <position position="256"/>
    </location>
</feature>
<feature type="modified residue" description="Phosphoserine" evidence="1">
    <location>
        <position position="288"/>
    </location>
</feature>
<feature type="modified residue" description="Phosphoserine" evidence="2">
    <location>
        <position position="293"/>
    </location>
</feature>
<organism>
    <name type="scientific">Bos taurus</name>
    <name type="common">Bovine</name>
    <dbReference type="NCBI Taxonomy" id="9913"/>
    <lineage>
        <taxon>Eukaryota</taxon>
        <taxon>Metazoa</taxon>
        <taxon>Chordata</taxon>
        <taxon>Craniata</taxon>
        <taxon>Vertebrata</taxon>
        <taxon>Euteleostomi</taxon>
        <taxon>Mammalia</taxon>
        <taxon>Eutheria</taxon>
        <taxon>Laurasiatheria</taxon>
        <taxon>Artiodactyla</taxon>
        <taxon>Ruminantia</taxon>
        <taxon>Pecora</taxon>
        <taxon>Bovidae</taxon>
        <taxon>Bovinae</taxon>
        <taxon>Bos</taxon>
    </lineage>
</organism>
<accession>Q2HJE1</accession>
<keyword id="KW-0175">Coiled coil</keyword>
<keyword id="KW-0967">Endosome</keyword>
<keyword id="KW-0472">Membrane</keyword>
<keyword id="KW-0597">Phosphoprotein</keyword>
<keyword id="KW-1185">Reference proteome</keyword>
<keyword id="KW-0677">Repeat</keyword>
<keyword id="KW-0853">WD repeat</keyword>
<proteinExistence type="evidence at transcript level"/>
<evidence type="ECO:0000250" key="1">
    <source>
        <dbReference type="UniProtKB" id="A4D1P6"/>
    </source>
</evidence>
<evidence type="ECO:0000250" key="2">
    <source>
        <dbReference type="UniProtKB" id="Q7TMQ7"/>
    </source>
</evidence>
<evidence type="ECO:0000255" key="3"/>
<evidence type="ECO:0000256" key="4">
    <source>
        <dbReference type="SAM" id="MobiDB-lite"/>
    </source>
</evidence>
<evidence type="ECO:0000305" key="5"/>